<organism>
    <name type="scientific">Chloroflexus aurantiacus (strain ATCC 29366 / DSM 635 / J-10-fl)</name>
    <dbReference type="NCBI Taxonomy" id="324602"/>
    <lineage>
        <taxon>Bacteria</taxon>
        <taxon>Bacillati</taxon>
        <taxon>Chloroflexota</taxon>
        <taxon>Chloroflexia</taxon>
        <taxon>Chloroflexales</taxon>
        <taxon>Chloroflexineae</taxon>
        <taxon>Chloroflexaceae</taxon>
        <taxon>Chloroflexus</taxon>
    </lineage>
</organism>
<name>Y1852_CHLAA</name>
<comment type="function">
    <text evidence="1">Nucleotide-binding protein.</text>
</comment>
<comment type="similarity">
    <text evidence="1">Belongs to the YajQ family.</text>
</comment>
<evidence type="ECO:0000255" key="1">
    <source>
        <dbReference type="HAMAP-Rule" id="MF_00632"/>
    </source>
</evidence>
<keyword id="KW-0547">Nucleotide-binding</keyword>
<keyword id="KW-1185">Reference proteome</keyword>
<sequence>MPAENSFDIVSDFDQQELVNAVDQTLREVQTRYDLKDAGVTITLTKTELIIEADSEMSLRSVRDVLETKALRRKLSLKIFDYGKPTDASGGRVRQVVTLRRGIDSELAKKLSKMIRDRFPKVQPRIQGDSLRVAGKSRDELQAVIAFLREREGEIPVPLQMTNYR</sequence>
<proteinExistence type="inferred from homology"/>
<protein>
    <recommendedName>
        <fullName evidence="1">Nucleotide-binding protein Caur_1852</fullName>
    </recommendedName>
</protein>
<dbReference type="EMBL" id="CP000909">
    <property type="protein sequence ID" value="ABY35069.1"/>
    <property type="molecule type" value="Genomic_DNA"/>
</dbReference>
<dbReference type="RefSeq" id="WP_012257723.1">
    <property type="nucleotide sequence ID" value="NC_010175.1"/>
</dbReference>
<dbReference type="RefSeq" id="YP_001635458.1">
    <property type="nucleotide sequence ID" value="NC_010175.1"/>
</dbReference>
<dbReference type="SMR" id="A9WDA2"/>
<dbReference type="FunCoup" id="A9WDA2">
    <property type="interactions" value="142"/>
</dbReference>
<dbReference type="STRING" id="324602.Caur_1852"/>
<dbReference type="EnsemblBacteria" id="ABY35069">
    <property type="protein sequence ID" value="ABY35069"/>
    <property type="gene ID" value="Caur_1852"/>
</dbReference>
<dbReference type="KEGG" id="cau:Caur_1852"/>
<dbReference type="PATRIC" id="fig|324602.8.peg.2114"/>
<dbReference type="eggNOG" id="COG1666">
    <property type="taxonomic scope" value="Bacteria"/>
</dbReference>
<dbReference type="HOGENOM" id="CLU_099839_0_0_0"/>
<dbReference type="InParanoid" id="A9WDA2"/>
<dbReference type="Proteomes" id="UP000002008">
    <property type="component" value="Chromosome"/>
</dbReference>
<dbReference type="GO" id="GO:0005829">
    <property type="term" value="C:cytosol"/>
    <property type="evidence" value="ECO:0000318"/>
    <property type="project" value="GO_Central"/>
</dbReference>
<dbReference type="GO" id="GO:0000166">
    <property type="term" value="F:nucleotide binding"/>
    <property type="evidence" value="ECO:0000318"/>
    <property type="project" value="GO_Central"/>
</dbReference>
<dbReference type="CDD" id="cd11740">
    <property type="entry name" value="YajQ_like"/>
    <property type="match status" value="1"/>
</dbReference>
<dbReference type="FunFam" id="3.30.70.990:FF:000002">
    <property type="entry name" value="UPF0234 protein LEP1GSC067_4943"/>
    <property type="match status" value="1"/>
</dbReference>
<dbReference type="Gene3D" id="3.30.70.860">
    <property type="match status" value="1"/>
</dbReference>
<dbReference type="Gene3D" id="3.30.70.990">
    <property type="entry name" value="YajQ-like, domain 2"/>
    <property type="match status" value="1"/>
</dbReference>
<dbReference type="HAMAP" id="MF_00632">
    <property type="entry name" value="YajQ"/>
    <property type="match status" value="1"/>
</dbReference>
<dbReference type="InterPro" id="IPR007551">
    <property type="entry name" value="DUF520"/>
</dbReference>
<dbReference type="InterPro" id="IPR035571">
    <property type="entry name" value="UPF0234-like_C"/>
</dbReference>
<dbReference type="InterPro" id="IPR035570">
    <property type="entry name" value="UPF0234_N"/>
</dbReference>
<dbReference type="InterPro" id="IPR036183">
    <property type="entry name" value="YajQ-like_sf"/>
</dbReference>
<dbReference type="NCBIfam" id="NF003819">
    <property type="entry name" value="PRK05412.1"/>
    <property type="match status" value="1"/>
</dbReference>
<dbReference type="PANTHER" id="PTHR30476">
    <property type="entry name" value="UPF0234 PROTEIN YAJQ"/>
    <property type="match status" value="1"/>
</dbReference>
<dbReference type="PANTHER" id="PTHR30476:SF0">
    <property type="entry name" value="UPF0234 PROTEIN YAJQ"/>
    <property type="match status" value="1"/>
</dbReference>
<dbReference type="Pfam" id="PF04461">
    <property type="entry name" value="DUF520"/>
    <property type="match status" value="1"/>
</dbReference>
<dbReference type="SUPFAM" id="SSF89963">
    <property type="entry name" value="YajQ-like"/>
    <property type="match status" value="2"/>
</dbReference>
<gene>
    <name type="ordered locus">Caur_1852</name>
</gene>
<reference key="1">
    <citation type="journal article" date="2011" name="BMC Genomics">
        <title>Complete genome sequence of the filamentous anoxygenic phototrophic bacterium Chloroflexus aurantiacus.</title>
        <authorList>
            <person name="Tang K.H."/>
            <person name="Barry K."/>
            <person name="Chertkov O."/>
            <person name="Dalin E."/>
            <person name="Han C.S."/>
            <person name="Hauser L.J."/>
            <person name="Honchak B.M."/>
            <person name="Karbach L.E."/>
            <person name="Land M.L."/>
            <person name="Lapidus A."/>
            <person name="Larimer F.W."/>
            <person name="Mikhailova N."/>
            <person name="Pitluck S."/>
            <person name="Pierson B.K."/>
            <person name="Blankenship R.E."/>
        </authorList>
    </citation>
    <scope>NUCLEOTIDE SEQUENCE [LARGE SCALE GENOMIC DNA]</scope>
    <source>
        <strain>ATCC 29366 / DSM 635 / J-10-fl</strain>
    </source>
</reference>
<accession>A9WDA2</accession>
<feature type="chain" id="PRO_1000147292" description="Nucleotide-binding protein Caur_1852">
    <location>
        <begin position="1"/>
        <end position="165"/>
    </location>
</feature>